<reference key="1">
    <citation type="submission" date="2005-09" db="EMBL/GenBank/DDBJ databases">
        <title>Complete sequence of chromosome 1 of Rhodobacter sphaeroides 2.4.1.</title>
        <authorList>
            <person name="Copeland A."/>
            <person name="Lucas S."/>
            <person name="Lapidus A."/>
            <person name="Barry K."/>
            <person name="Detter J.C."/>
            <person name="Glavina T."/>
            <person name="Hammon N."/>
            <person name="Israni S."/>
            <person name="Pitluck S."/>
            <person name="Richardson P."/>
            <person name="Mackenzie C."/>
            <person name="Choudhary M."/>
            <person name="Larimer F."/>
            <person name="Hauser L.J."/>
            <person name="Land M."/>
            <person name="Donohue T.J."/>
            <person name="Kaplan S."/>
        </authorList>
    </citation>
    <scope>NUCLEOTIDE SEQUENCE [LARGE SCALE GENOMIC DNA]</scope>
    <source>
        <strain>ATCC 17023 / DSM 158 / JCM 6121 / CCUG 31486 / LMG 2827 / NBRC 12203 / NCIMB 8253 / ATH 2.4.1.</strain>
    </source>
</reference>
<protein>
    <recommendedName>
        <fullName evidence="1">tRNA-cytidine(32) 2-sulfurtransferase</fullName>
        <ecNumber evidence="1">2.8.1.-</ecNumber>
    </recommendedName>
    <alternativeName>
        <fullName evidence="1">Two-thiocytidine biosynthesis protein A</fullName>
    </alternativeName>
    <alternativeName>
        <fullName evidence="1">tRNA 2-thiocytidine biosynthesis protein TtcA</fullName>
    </alternativeName>
</protein>
<feature type="chain" id="PRO_0000348818" description="tRNA-cytidine(32) 2-sulfurtransferase">
    <location>
        <begin position="1"/>
        <end position="292"/>
    </location>
</feature>
<feature type="short sequence motif" description="PP-loop motif" evidence="1">
    <location>
        <begin position="53"/>
        <end position="58"/>
    </location>
</feature>
<feature type="binding site" evidence="1">
    <location>
        <position position="128"/>
    </location>
    <ligand>
        <name>[4Fe-4S] cluster</name>
        <dbReference type="ChEBI" id="CHEBI:49883"/>
    </ligand>
</feature>
<feature type="binding site" evidence="1">
    <location>
        <position position="131"/>
    </location>
    <ligand>
        <name>[4Fe-4S] cluster</name>
        <dbReference type="ChEBI" id="CHEBI:49883"/>
    </ligand>
</feature>
<feature type="binding site" evidence="1">
    <location>
        <position position="219"/>
    </location>
    <ligand>
        <name>[4Fe-4S] cluster</name>
        <dbReference type="ChEBI" id="CHEBI:49883"/>
    </ligand>
</feature>
<name>TTCA_CERS4</name>
<comment type="function">
    <text evidence="1">Catalyzes the ATP-dependent 2-thiolation of cytidine in position 32 of tRNA, to form 2-thiocytidine (s(2)C32). The sulfur atoms are provided by the cysteine/cysteine desulfurase (IscS) system.</text>
</comment>
<comment type="catalytic activity">
    <reaction evidence="1">
        <text>cytidine(32) in tRNA + S-sulfanyl-L-cysteinyl-[cysteine desulfurase] + AH2 + ATP = 2-thiocytidine(32) in tRNA + L-cysteinyl-[cysteine desulfurase] + A + AMP + diphosphate + H(+)</text>
        <dbReference type="Rhea" id="RHEA:57048"/>
        <dbReference type="Rhea" id="RHEA-COMP:10288"/>
        <dbReference type="Rhea" id="RHEA-COMP:12157"/>
        <dbReference type="Rhea" id="RHEA-COMP:12158"/>
        <dbReference type="Rhea" id="RHEA-COMP:14821"/>
        <dbReference type="ChEBI" id="CHEBI:13193"/>
        <dbReference type="ChEBI" id="CHEBI:15378"/>
        <dbReference type="ChEBI" id="CHEBI:17499"/>
        <dbReference type="ChEBI" id="CHEBI:29950"/>
        <dbReference type="ChEBI" id="CHEBI:30616"/>
        <dbReference type="ChEBI" id="CHEBI:33019"/>
        <dbReference type="ChEBI" id="CHEBI:61963"/>
        <dbReference type="ChEBI" id="CHEBI:82748"/>
        <dbReference type="ChEBI" id="CHEBI:141453"/>
        <dbReference type="ChEBI" id="CHEBI:456215"/>
    </reaction>
    <physiologicalReaction direction="left-to-right" evidence="1">
        <dbReference type="Rhea" id="RHEA:57049"/>
    </physiologicalReaction>
</comment>
<comment type="cofactor">
    <cofactor evidence="1">
        <name>Mg(2+)</name>
        <dbReference type="ChEBI" id="CHEBI:18420"/>
    </cofactor>
</comment>
<comment type="cofactor">
    <cofactor evidence="1">
        <name>[4Fe-4S] cluster</name>
        <dbReference type="ChEBI" id="CHEBI:49883"/>
    </cofactor>
    <text evidence="1">Binds 1 [4Fe-4S] cluster per subunit. The cluster is chelated by three Cys residues, the fourth Fe has a free coordination site that may bind a sulfur atom transferred from the persulfide of IscS.</text>
</comment>
<comment type="pathway">
    <text evidence="1">tRNA modification.</text>
</comment>
<comment type="subunit">
    <text evidence="1">Homodimer.</text>
</comment>
<comment type="subcellular location">
    <subcellularLocation>
        <location evidence="1">Cytoplasm</location>
    </subcellularLocation>
</comment>
<comment type="miscellaneous">
    <text evidence="1">The thiolation reaction likely consists of two steps: a first activation step by ATP to form an adenylated intermediate of the target base of tRNA, and a second nucleophilic substitution step of the sulfur (S) atom supplied by the hydrosulfide attached to the Fe-S cluster.</text>
</comment>
<comment type="similarity">
    <text evidence="1">Belongs to the TtcA family.</text>
</comment>
<organism>
    <name type="scientific">Cereibacter sphaeroides (strain ATCC 17023 / DSM 158 / JCM 6121 / CCUG 31486 / LMG 2827 / NBRC 12203 / NCIMB 8253 / ATH 2.4.1.)</name>
    <name type="common">Rhodobacter sphaeroides</name>
    <dbReference type="NCBI Taxonomy" id="272943"/>
    <lineage>
        <taxon>Bacteria</taxon>
        <taxon>Pseudomonadati</taxon>
        <taxon>Pseudomonadota</taxon>
        <taxon>Alphaproteobacteria</taxon>
        <taxon>Rhodobacterales</taxon>
        <taxon>Paracoccaceae</taxon>
        <taxon>Cereibacter</taxon>
    </lineage>
</organism>
<keyword id="KW-0004">4Fe-4S</keyword>
<keyword id="KW-0067">ATP-binding</keyword>
<keyword id="KW-0963">Cytoplasm</keyword>
<keyword id="KW-0408">Iron</keyword>
<keyword id="KW-0411">Iron-sulfur</keyword>
<keyword id="KW-0460">Magnesium</keyword>
<keyword id="KW-0479">Metal-binding</keyword>
<keyword id="KW-0547">Nucleotide-binding</keyword>
<keyword id="KW-1185">Reference proteome</keyword>
<keyword id="KW-0694">RNA-binding</keyword>
<keyword id="KW-0808">Transferase</keyword>
<keyword id="KW-0819">tRNA processing</keyword>
<keyword id="KW-0820">tRNA-binding</keyword>
<gene>
    <name evidence="1" type="primary">ttcA</name>
    <name type="ordered locus">RHOS4_26780</name>
    <name type="ORF">RSP_1062</name>
</gene>
<sequence length="292" mass="33166">MFDDQDEIHPLLAGAPQTTEFRKLRKRIVREVREAIETYGMVERGARWLVCLSGGKDSYTLLAVLHELKWRGLLPVDLLACNLDQGQPGFPATVLPEFLSRMGVPHRIEYQDTYSIVMDKIPQGRTYCALCSRLRRGNLYRIAREEGCSAVVLGHHRDDILETFFMNLFHGGRLATMPPKLVNEDGDLFVYRPLAFVAEADCEKFARDMAYPIIPCDLCGSQEGLQRQQVKQILDGWEARSPGRRQVMFRALMNARPSHLLDPGLFDFLGLATAPRASEERQDEPPHLRGEA</sequence>
<accession>Q3IYY8</accession>
<evidence type="ECO:0000255" key="1">
    <source>
        <dbReference type="HAMAP-Rule" id="MF_01850"/>
    </source>
</evidence>
<dbReference type="EC" id="2.8.1.-" evidence="1"/>
<dbReference type="EMBL" id="CP000143">
    <property type="protein sequence ID" value="ABA80246.1"/>
    <property type="molecule type" value="Genomic_DNA"/>
</dbReference>
<dbReference type="RefSeq" id="WP_011338688.1">
    <property type="nucleotide sequence ID" value="NZ_CP030271.1"/>
</dbReference>
<dbReference type="RefSeq" id="YP_354147.1">
    <property type="nucleotide sequence ID" value="NC_007493.2"/>
</dbReference>
<dbReference type="SMR" id="Q3IYY8"/>
<dbReference type="STRING" id="272943.RSP_1062"/>
<dbReference type="DNASU" id="3720915"/>
<dbReference type="EnsemblBacteria" id="ABA80246">
    <property type="protein sequence ID" value="ABA80246"/>
    <property type="gene ID" value="RSP_1062"/>
</dbReference>
<dbReference type="GeneID" id="3720915"/>
<dbReference type="KEGG" id="rsp:RSP_1062"/>
<dbReference type="PATRIC" id="fig|272943.9.peg.3036"/>
<dbReference type="eggNOG" id="COG0037">
    <property type="taxonomic scope" value="Bacteria"/>
</dbReference>
<dbReference type="OrthoDB" id="9801054at2"/>
<dbReference type="PhylomeDB" id="Q3IYY8"/>
<dbReference type="Proteomes" id="UP000002703">
    <property type="component" value="Chromosome 1"/>
</dbReference>
<dbReference type="GO" id="GO:0005737">
    <property type="term" value="C:cytoplasm"/>
    <property type="evidence" value="ECO:0007669"/>
    <property type="project" value="UniProtKB-SubCell"/>
</dbReference>
<dbReference type="GO" id="GO:0051539">
    <property type="term" value="F:4 iron, 4 sulfur cluster binding"/>
    <property type="evidence" value="ECO:0007669"/>
    <property type="project" value="UniProtKB-UniRule"/>
</dbReference>
<dbReference type="GO" id="GO:0005524">
    <property type="term" value="F:ATP binding"/>
    <property type="evidence" value="ECO:0007669"/>
    <property type="project" value="UniProtKB-UniRule"/>
</dbReference>
<dbReference type="GO" id="GO:0000287">
    <property type="term" value="F:magnesium ion binding"/>
    <property type="evidence" value="ECO:0007669"/>
    <property type="project" value="UniProtKB-UniRule"/>
</dbReference>
<dbReference type="GO" id="GO:0016783">
    <property type="term" value="F:sulfurtransferase activity"/>
    <property type="evidence" value="ECO:0007669"/>
    <property type="project" value="UniProtKB-UniRule"/>
</dbReference>
<dbReference type="GO" id="GO:0000049">
    <property type="term" value="F:tRNA binding"/>
    <property type="evidence" value="ECO:0007669"/>
    <property type="project" value="UniProtKB-KW"/>
</dbReference>
<dbReference type="GO" id="GO:0034227">
    <property type="term" value="P:tRNA thio-modification"/>
    <property type="evidence" value="ECO:0007669"/>
    <property type="project" value="UniProtKB-UniRule"/>
</dbReference>
<dbReference type="CDD" id="cd24138">
    <property type="entry name" value="TtcA-like"/>
    <property type="match status" value="1"/>
</dbReference>
<dbReference type="Gene3D" id="3.40.50.620">
    <property type="entry name" value="HUPs"/>
    <property type="match status" value="1"/>
</dbReference>
<dbReference type="HAMAP" id="MF_01850">
    <property type="entry name" value="TtcA"/>
    <property type="match status" value="1"/>
</dbReference>
<dbReference type="InterPro" id="IPR014729">
    <property type="entry name" value="Rossmann-like_a/b/a_fold"/>
</dbReference>
<dbReference type="InterPro" id="IPR011063">
    <property type="entry name" value="TilS/TtcA_N"/>
</dbReference>
<dbReference type="InterPro" id="IPR012089">
    <property type="entry name" value="tRNA_Cyd_32_2_STrfase"/>
</dbReference>
<dbReference type="InterPro" id="IPR035107">
    <property type="entry name" value="tRNA_thiolation_TtcA_Ctu1"/>
</dbReference>
<dbReference type="NCBIfam" id="NF007972">
    <property type="entry name" value="PRK10696.1"/>
    <property type="match status" value="1"/>
</dbReference>
<dbReference type="PANTHER" id="PTHR43686:SF1">
    <property type="entry name" value="AMINOTRAN_5 DOMAIN-CONTAINING PROTEIN"/>
    <property type="match status" value="1"/>
</dbReference>
<dbReference type="PANTHER" id="PTHR43686">
    <property type="entry name" value="SULFURTRANSFERASE-RELATED"/>
    <property type="match status" value="1"/>
</dbReference>
<dbReference type="Pfam" id="PF01171">
    <property type="entry name" value="ATP_bind_3"/>
    <property type="match status" value="1"/>
</dbReference>
<dbReference type="PIRSF" id="PIRSF004976">
    <property type="entry name" value="ATPase_YdaO"/>
    <property type="match status" value="1"/>
</dbReference>
<dbReference type="SUPFAM" id="SSF52402">
    <property type="entry name" value="Adenine nucleotide alpha hydrolases-like"/>
    <property type="match status" value="1"/>
</dbReference>
<proteinExistence type="inferred from homology"/>